<reference key="1">
    <citation type="submission" date="2009-02" db="EMBL/GenBank/DDBJ databases">
        <title>Vibrio splendidus str. LGP32 complete genome.</title>
        <authorList>
            <person name="Mazel D."/>
            <person name="Le Roux F."/>
        </authorList>
    </citation>
    <scope>NUCLEOTIDE SEQUENCE [LARGE SCALE GENOMIC DNA]</scope>
    <source>
        <strain>LGP32</strain>
    </source>
</reference>
<evidence type="ECO:0000255" key="1">
    <source>
        <dbReference type="HAMAP-Rule" id="MF_00373"/>
    </source>
</evidence>
<evidence type="ECO:0000256" key="2">
    <source>
        <dbReference type="SAM" id="MobiDB-lite"/>
    </source>
</evidence>
<evidence type="ECO:0000305" key="3"/>
<gene>
    <name evidence="1" type="primary">rpmB</name>
    <name type="ordered locus">VS_0183</name>
</gene>
<comment type="similarity">
    <text evidence="1">Belongs to the bacterial ribosomal protein bL28 family.</text>
</comment>
<protein>
    <recommendedName>
        <fullName evidence="1">Large ribosomal subunit protein bL28</fullName>
    </recommendedName>
    <alternativeName>
        <fullName evidence="3">50S ribosomal protein L28</fullName>
    </alternativeName>
</protein>
<dbReference type="EMBL" id="FM954972">
    <property type="protein sequence ID" value="CAV17215.1"/>
    <property type="molecule type" value="Genomic_DNA"/>
</dbReference>
<dbReference type="SMR" id="B7VHK3"/>
<dbReference type="STRING" id="575788.VS_0183"/>
<dbReference type="KEGG" id="vsp:VS_0183"/>
<dbReference type="eggNOG" id="COG0227">
    <property type="taxonomic scope" value="Bacteria"/>
</dbReference>
<dbReference type="HOGENOM" id="CLU_064548_3_1_6"/>
<dbReference type="Proteomes" id="UP000009100">
    <property type="component" value="Chromosome 1"/>
</dbReference>
<dbReference type="GO" id="GO:0022625">
    <property type="term" value="C:cytosolic large ribosomal subunit"/>
    <property type="evidence" value="ECO:0007669"/>
    <property type="project" value="TreeGrafter"/>
</dbReference>
<dbReference type="GO" id="GO:0003735">
    <property type="term" value="F:structural constituent of ribosome"/>
    <property type="evidence" value="ECO:0007669"/>
    <property type="project" value="InterPro"/>
</dbReference>
<dbReference type="GO" id="GO:0006412">
    <property type="term" value="P:translation"/>
    <property type="evidence" value="ECO:0007669"/>
    <property type="project" value="UniProtKB-UniRule"/>
</dbReference>
<dbReference type="FunFam" id="2.30.170.40:FF:000001">
    <property type="entry name" value="50S ribosomal protein L28"/>
    <property type="match status" value="1"/>
</dbReference>
<dbReference type="Gene3D" id="2.30.170.40">
    <property type="entry name" value="Ribosomal protein L28/L24"/>
    <property type="match status" value="1"/>
</dbReference>
<dbReference type="HAMAP" id="MF_00373">
    <property type="entry name" value="Ribosomal_bL28"/>
    <property type="match status" value="1"/>
</dbReference>
<dbReference type="InterPro" id="IPR026569">
    <property type="entry name" value="Ribosomal_bL28"/>
</dbReference>
<dbReference type="InterPro" id="IPR034704">
    <property type="entry name" value="Ribosomal_bL28/bL31-like_sf"/>
</dbReference>
<dbReference type="InterPro" id="IPR001383">
    <property type="entry name" value="Ribosomal_bL28_bact-type"/>
</dbReference>
<dbReference type="InterPro" id="IPR037147">
    <property type="entry name" value="Ribosomal_bL28_sf"/>
</dbReference>
<dbReference type="NCBIfam" id="TIGR00009">
    <property type="entry name" value="L28"/>
    <property type="match status" value="1"/>
</dbReference>
<dbReference type="PANTHER" id="PTHR13528">
    <property type="entry name" value="39S RIBOSOMAL PROTEIN L28, MITOCHONDRIAL"/>
    <property type="match status" value="1"/>
</dbReference>
<dbReference type="PANTHER" id="PTHR13528:SF2">
    <property type="entry name" value="LARGE RIBOSOMAL SUBUNIT PROTEIN BL28M"/>
    <property type="match status" value="1"/>
</dbReference>
<dbReference type="Pfam" id="PF00830">
    <property type="entry name" value="Ribosomal_L28"/>
    <property type="match status" value="1"/>
</dbReference>
<dbReference type="SUPFAM" id="SSF143800">
    <property type="entry name" value="L28p-like"/>
    <property type="match status" value="1"/>
</dbReference>
<keyword id="KW-0687">Ribonucleoprotein</keyword>
<keyword id="KW-0689">Ribosomal protein</keyword>
<feature type="chain" id="PRO_1000195950" description="Large ribosomal subunit protein bL28">
    <location>
        <begin position="1"/>
        <end position="78"/>
    </location>
</feature>
<feature type="region of interest" description="Disordered" evidence="2">
    <location>
        <begin position="1"/>
        <end position="20"/>
    </location>
</feature>
<proteinExistence type="inferred from homology"/>
<organism>
    <name type="scientific">Vibrio atlanticus (strain LGP32)</name>
    <name type="common">Vibrio splendidus (strain Mel32)</name>
    <dbReference type="NCBI Taxonomy" id="575788"/>
    <lineage>
        <taxon>Bacteria</taxon>
        <taxon>Pseudomonadati</taxon>
        <taxon>Pseudomonadota</taxon>
        <taxon>Gammaproteobacteria</taxon>
        <taxon>Vibrionales</taxon>
        <taxon>Vibrionaceae</taxon>
        <taxon>Vibrio</taxon>
    </lineage>
</organism>
<name>RL28_VIBA3</name>
<sequence>MSRVCQVTGKRPVTGNNRSHARNATKRRFLPNLQTHRFWVESEKRFVKLRLTAKGMRIIDKKGIDAVLVDIRARGENV</sequence>
<accession>B7VHK3</accession>